<dbReference type="EC" id="5.2.1.8"/>
<dbReference type="EMBL" id="CM003156">
    <property type="protein sequence ID" value="KIS66788.1"/>
    <property type="molecule type" value="Genomic_DNA"/>
</dbReference>
<dbReference type="RefSeq" id="XP_011391699.1">
    <property type="nucleotide sequence ID" value="XM_011393397.1"/>
</dbReference>
<dbReference type="SMR" id="Q4P4W3"/>
<dbReference type="STRING" id="237631.Q4P4W3"/>
<dbReference type="EnsemblFungi" id="KIS66788">
    <property type="protein sequence ID" value="KIS66788"/>
    <property type="gene ID" value="UMAG_04850"/>
</dbReference>
<dbReference type="GeneID" id="23564903"/>
<dbReference type="KEGG" id="uma:UMAG_04850"/>
<dbReference type="VEuPathDB" id="FungiDB:UMAG_04850"/>
<dbReference type="eggNOG" id="KOG2867">
    <property type="taxonomic scope" value="Eukaryota"/>
</dbReference>
<dbReference type="HOGENOM" id="CLU_030733_1_2_1"/>
<dbReference type="InParanoid" id="Q4P4W3"/>
<dbReference type="OMA" id="FRIWHEL"/>
<dbReference type="OrthoDB" id="16120at2759"/>
<dbReference type="Proteomes" id="UP000000561">
    <property type="component" value="Chromosome 17"/>
</dbReference>
<dbReference type="GO" id="GO:0005737">
    <property type="term" value="C:cytoplasm"/>
    <property type="evidence" value="ECO:0000318"/>
    <property type="project" value="GO_Central"/>
</dbReference>
<dbReference type="GO" id="GO:0005634">
    <property type="term" value="C:nucleus"/>
    <property type="evidence" value="ECO:0000318"/>
    <property type="project" value="GO_Central"/>
</dbReference>
<dbReference type="GO" id="GO:0000159">
    <property type="term" value="C:protein phosphatase type 2A complex"/>
    <property type="evidence" value="ECO:0000318"/>
    <property type="project" value="GO_Central"/>
</dbReference>
<dbReference type="GO" id="GO:0003755">
    <property type="term" value="F:peptidyl-prolyl cis-trans isomerase activity"/>
    <property type="evidence" value="ECO:0000318"/>
    <property type="project" value="GO_Central"/>
</dbReference>
<dbReference type="GO" id="GO:0008160">
    <property type="term" value="F:protein tyrosine phosphatase activator activity"/>
    <property type="evidence" value="ECO:0000318"/>
    <property type="project" value="GO_Central"/>
</dbReference>
<dbReference type="GO" id="GO:0007052">
    <property type="term" value="P:mitotic spindle organization"/>
    <property type="evidence" value="ECO:0000318"/>
    <property type="project" value="GO_Central"/>
</dbReference>
<dbReference type="CDD" id="cd04087">
    <property type="entry name" value="PTPA"/>
    <property type="match status" value="1"/>
</dbReference>
<dbReference type="Gene3D" id="1.20.120.1150">
    <property type="match status" value="1"/>
</dbReference>
<dbReference type="InterPro" id="IPR004327">
    <property type="entry name" value="Phstyr_phstse_ac"/>
</dbReference>
<dbReference type="InterPro" id="IPR043170">
    <property type="entry name" value="PTPA_C_lid"/>
</dbReference>
<dbReference type="InterPro" id="IPR037218">
    <property type="entry name" value="PTPA_sf"/>
</dbReference>
<dbReference type="PANTHER" id="PTHR10012">
    <property type="entry name" value="SERINE/THREONINE-PROTEIN PHOSPHATASE 2A REGULATORY SUBUNIT B"/>
    <property type="match status" value="1"/>
</dbReference>
<dbReference type="PANTHER" id="PTHR10012:SF0">
    <property type="entry name" value="SERINE_THREONINE-PROTEIN PHOSPHATASE 2A ACTIVATOR"/>
    <property type="match status" value="1"/>
</dbReference>
<dbReference type="Pfam" id="PF03095">
    <property type="entry name" value="PTPA"/>
    <property type="match status" value="1"/>
</dbReference>
<dbReference type="SUPFAM" id="SSF140984">
    <property type="entry name" value="PTPA-like"/>
    <property type="match status" value="1"/>
</dbReference>
<organism>
    <name type="scientific">Mycosarcoma maydis</name>
    <name type="common">Corn smut fungus</name>
    <name type="synonym">Ustilago maydis</name>
    <dbReference type="NCBI Taxonomy" id="5270"/>
    <lineage>
        <taxon>Eukaryota</taxon>
        <taxon>Fungi</taxon>
        <taxon>Dikarya</taxon>
        <taxon>Basidiomycota</taxon>
        <taxon>Ustilaginomycotina</taxon>
        <taxon>Ustilaginomycetes</taxon>
        <taxon>Ustilaginales</taxon>
        <taxon>Ustilaginaceae</taxon>
        <taxon>Mycosarcoma</taxon>
    </lineage>
</organism>
<reference key="1">
    <citation type="journal article" date="2006" name="Nature">
        <title>Insights from the genome of the biotrophic fungal plant pathogen Ustilago maydis.</title>
        <authorList>
            <person name="Kaemper J."/>
            <person name="Kahmann R."/>
            <person name="Boelker M."/>
            <person name="Ma L.-J."/>
            <person name="Brefort T."/>
            <person name="Saville B.J."/>
            <person name="Banuett F."/>
            <person name="Kronstad J.W."/>
            <person name="Gold S.E."/>
            <person name="Mueller O."/>
            <person name="Perlin M.H."/>
            <person name="Woesten H.A.B."/>
            <person name="de Vries R."/>
            <person name="Ruiz-Herrera J."/>
            <person name="Reynaga-Pena C.G."/>
            <person name="Snetselaar K."/>
            <person name="McCann M."/>
            <person name="Perez-Martin J."/>
            <person name="Feldbruegge M."/>
            <person name="Basse C.W."/>
            <person name="Steinberg G."/>
            <person name="Ibeas J.I."/>
            <person name="Holloman W."/>
            <person name="Guzman P."/>
            <person name="Farman M.L."/>
            <person name="Stajich J.E."/>
            <person name="Sentandreu R."/>
            <person name="Gonzalez-Prieto J.M."/>
            <person name="Kennell J.C."/>
            <person name="Molina L."/>
            <person name="Schirawski J."/>
            <person name="Mendoza-Mendoza A."/>
            <person name="Greilinger D."/>
            <person name="Muench K."/>
            <person name="Roessel N."/>
            <person name="Scherer M."/>
            <person name="Vranes M."/>
            <person name="Ladendorf O."/>
            <person name="Vincon V."/>
            <person name="Fuchs U."/>
            <person name="Sandrock B."/>
            <person name="Meng S."/>
            <person name="Ho E.C.H."/>
            <person name="Cahill M.J."/>
            <person name="Boyce K.J."/>
            <person name="Klose J."/>
            <person name="Klosterman S.J."/>
            <person name="Deelstra H.J."/>
            <person name="Ortiz-Castellanos L."/>
            <person name="Li W."/>
            <person name="Sanchez-Alonso P."/>
            <person name="Schreier P.H."/>
            <person name="Haeuser-Hahn I."/>
            <person name="Vaupel M."/>
            <person name="Koopmann E."/>
            <person name="Friedrich G."/>
            <person name="Voss H."/>
            <person name="Schlueter T."/>
            <person name="Margolis J."/>
            <person name="Platt D."/>
            <person name="Swimmer C."/>
            <person name="Gnirke A."/>
            <person name="Chen F."/>
            <person name="Vysotskaia V."/>
            <person name="Mannhaupt G."/>
            <person name="Gueldener U."/>
            <person name="Muensterkoetter M."/>
            <person name="Haase D."/>
            <person name="Oesterheld M."/>
            <person name="Mewes H.-W."/>
            <person name="Mauceli E.W."/>
            <person name="DeCaprio D."/>
            <person name="Wade C.M."/>
            <person name="Butler J."/>
            <person name="Young S.K."/>
            <person name="Jaffe D.B."/>
            <person name="Calvo S.E."/>
            <person name="Nusbaum C."/>
            <person name="Galagan J.E."/>
            <person name="Birren B.W."/>
        </authorList>
    </citation>
    <scope>NUCLEOTIDE SEQUENCE [LARGE SCALE GENOMIC DNA]</scope>
    <source>
        <strain>DSM 14603 / FGSC 9021 / UM521</strain>
    </source>
</reference>
<reference key="2">
    <citation type="submission" date="2014-09" db="EMBL/GenBank/DDBJ databases">
        <authorList>
            <person name="Gueldener U."/>
            <person name="Muensterkoetter M."/>
            <person name="Walter M.C."/>
            <person name="Mannhaupt G."/>
            <person name="Kahmann R."/>
        </authorList>
    </citation>
    <scope>GENOME REANNOTATION</scope>
    <source>
        <strain>DSM 14603 / FGSC 9021 / UM521</strain>
    </source>
</reference>
<sequence>MPMIPPALRRTQAAATPTTSSPAASSSTTATLDSQSLCALPRIRVSASTLNSIVTPVKKITSETDVEAWKASAAYSIYTLFLQRVCEACVGKPTRLPTRSTDAPVTPVDKLVSLLWELDSWTQEIEPHEKPQRFGNLAFRDWGARLEERIDSLLSDLLPSRLHAFAVELRVYLLDSFGSFTRIDYGSGHELAFFAWLCFLYRLGFFDASEEQEQDETLADIQVEERIGLDIFPLYLMVVWKLQDRYGLEPAGSHGVWGLDDFQFLPYVIGAAQLRRQSGLRPNQVIGASSHASILQTQLATRTDPASLISTTLVLPASSLVGTQVEVPLPNLYLSSLLRIHVLKRGPFHEHSPLLNDIASSVPNWLKVYFGMLKMYAAECLAKKVVVQHFAFGGVGWVWTHQAHSELPRLATPSAPVAARRHLPLGGIQGNMTSMGVPTPRITRPPATPDSFDHPLRLPPRSTPSRPSTTPSVPPLAASTRPAPKPE</sequence>
<evidence type="ECO:0000250" key="1"/>
<evidence type="ECO:0000256" key="2">
    <source>
        <dbReference type="SAM" id="MobiDB-lite"/>
    </source>
</evidence>
<evidence type="ECO:0000305" key="3"/>
<proteinExistence type="inferred from homology"/>
<keyword id="KW-0963">Cytoplasm</keyword>
<keyword id="KW-0413">Isomerase</keyword>
<keyword id="KW-0539">Nucleus</keyword>
<keyword id="KW-1185">Reference proteome</keyword>
<keyword id="KW-0697">Rotamase</keyword>
<gene>
    <name type="primary">RRD1</name>
    <name type="ORF">UMAG_04850</name>
</gene>
<feature type="chain" id="PRO_0000226104" description="Serine/threonine-protein phosphatase 2A activator 1">
    <location>
        <begin position="1"/>
        <end position="487"/>
    </location>
</feature>
<feature type="region of interest" description="Disordered" evidence="2">
    <location>
        <begin position="1"/>
        <end position="28"/>
    </location>
</feature>
<feature type="region of interest" description="Disordered" evidence="2">
    <location>
        <begin position="426"/>
        <end position="487"/>
    </location>
</feature>
<protein>
    <recommendedName>
        <fullName>Serine/threonine-protein phosphatase 2A activator 1</fullName>
        <ecNumber>5.2.1.8</ecNumber>
    </recommendedName>
    <alternativeName>
        <fullName>Peptidyl-prolyl cis-trans isomerase PTPA-1</fullName>
        <shortName>PPIase PTPA-1</shortName>
        <shortName>Rotamase PTPA-1</shortName>
    </alternativeName>
    <alternativeName>
        <fullName>Phosphotyrosyl phosphatase activator 1</fullName>
    </alternativeName>
</protein>
<comment type="function">
    <text evidence="1">PPIases accelerate the folding of proteins. It catalyzes the cis-trans isomerization of proline imidic peptide bonds in oligopeptides. Acts as a regulatory subunit for PP2A-like phosphatases modulating their activity or substrate specificity, probably by inducing a conformational change in the catalytic subunit, a direct target of the PPIase. Can reactivate inactive phosphatase PP2A-phosphatase methylesterase complexes (PP2Ai) in presence of ATP and Mg(2+) by dissociating the inactive form from the complex (By similarity).</text>
</comment>
<comment type="catalytic activity">
    <reaction>
        <text>[protein]-peptidylproline (omega=180) = [protein]-peptidylproline (omega=0)</text>
        <dbReference type="Rhea" id="RHEA:16237"/>
        <dbReference type="Rhea" id="RHEA-COMP:10747"/>
        <dbReference type="Rhea" id="RHEA-COMP:10748"/>
        <dbReference type="ChEBI" id="CHEBI:83833"/>
        <dbReference type="ChEBI" id="CHEBI:83834"/>
        <dbReference type="EC" id="5.2.1.8"/>
    </reaction>
</comment>
<comment type="subcellular location">
    <subcellularLocation>
        <location evidence="1">Cytoplasm</location>
    </subcellularLocation>
    <subcellularLocation>
        <location evidence="1">Nucleus</location>
    </subcellularLocation>
</comment>
<comment type="similarity">
    <text evidence="3">Belongs to the PTPA-type PPIase family.</text>
</comment>
<name>PTPA1_MYCMD</name>
<accession>Q4P4W3</accession>
<accession>A0A0D1CII7</accession>